<evidence type="ECO:0000250" key="1">
    <source>
        <dbReference type="UniProtKB" id="P24344"/>
    </source>
</evidence>
<evidence type="ECO:0000255" key="2">
    <source>
        <dbReference type="PROSITE-ProRule" id="PRU00108"/>
    </source>
</evidence>
<evidence type="ECO:0000256" key="3">
    <source>
        <dbReference type="SAM" id="MobiDB-lite"/>
    </source>
</evidence>
<evidence type="ECO:0000269" key="4">
    <source>
    </source>
</evidence>
<evidence type="ECO:0000269" key="5">
    <source>
    </source>
</evidence>
<evidence type="ECO:0000269" key="6">
    <source>
    </source>
</evidence>
<evidence type="ECO:0000269" key="7">
    <source>
    </source>
</evidence>
<evidence type="ECO:0000269" key="8">
    <source>
    </source>
</evidence>
<evidence type="ECO:0000269" key="9">
    <source>
    </source>
</evidence>
<evidence type="ECO:0000269" key="10">
    <source>
    </source>
</evidence>
<evidence type="ECO:0000269" key="11">
    <source>
    </source>
</evidence>
<evidence type="ECO:0000269" key="12">
    <source>
    </source>
</evidence>
<evidence type="ECO:0000305" key="13"/>
<evidence type="ECO:0000305" key="14">
    <source>
    </source>
</evidence>
<gene>
    <name type="primary">HOXD13</name>
    <name type="synonym">HOX4I</name>
</gene>
<proteinExistence type="evidence at protein level"/>
<dbReference type="EMBL" id="AF005220">
    <property type="protein sequence ID" value="AAC51635.1"/>
    <property type="status" value="ALT_INIT"/>
    <property type="molecule type" value="Genomic_DNA"/>
</dbReference>
<dbReference type="EMBL" id="AF005219">
    <property type="protein sequence ID" value="AAC51635.1"/>
    <property type="status" value="JOINED"/>
    <property type="molecule type" value="Genomic_DNA"/>
</dbReference>
<dbReference type="EMBL" id="AB032481">
    <property type="protein sequence ID" value="BAA95352.1"/>
    <property type="status" value="ALT_INIT"/>
    <property type="molecule type" value="Genomic_DNA"/>
</dbReference>
<dbReference type="EMBL" id="AC009336">
    <property type="status" value="NOT_ANNOTATED_CDS"/>
    <property type="molecule type" value="Genomic_DNA"/>
</dbReference>
<dbReference type="CCDS" id="CCDS2264.2"/>
<dbReference type="PIR" id="B39065">
    <property type="entry name" value="B39065"/>
</dbReference>
<dbReference type="RefSeq" id="NP_000514.2">
    <property type="nucleotide sequence ID" value="NM_000523.4"/>
</dbReference>
<dbReference type="SMR" id="P35453"/>
<dbReference type="BioGRID" id="109479">
    <property type="interactions" value="77"/>
</dbReference>
<dbReference type="FunCoup" id="P35453">
    <property type="interactions" value="1071"/>
</dbReference>
<dbReference type="IntAct" id="P35453">
    <property type="interactions" value="45"/>
</dbReference>
<dbReference type="MINT" id="P35453"/>
<dbReference type="STRING" id="9606.ENSP00000376322"/>
<dbReference type="GlyGen" id="P35453">
    <property type="glycosylation" value="2 sites, 1 O-linked glycan (1 site)"/>
</dbReference>
<dbReference type="iPTMnet" id="P35453"/>
<dbReference type="PhosphoSitePlus" id="P35453"/>
<dbReference type="BioMuta" id="HOXD13"/>
<dbReference type="DMDM" id="223590221"/>
<dbReference type="jPOST" id="P35453"/>
<dbReference type="MassIVE" id="P35453"/>
<dbReference type="PaxDb" id="9606-ENSP00000376322"/>
<dbReference type="PeptideAtlas" id="P35453"/>
<dbReference type="ProteomicsDB" id="55065"/>
<dbReference type="Pumba" id="P35453"/>
<dbReference type="Antibodypedia" id="33902">
    <property type="antibodies" value="250 antibodies from 32 providers"/>
</dbReference>
<dbReference type="DNASU" id="3239"/>
<dbReference type="Ensembl" id="ENST00000392539.4">
    <property type="protein sequence ID" value="ENSP00000376322.3"/>
    <property type="gene ID" value="ENSG00000128714.6"/>
</dbReference>
<dbReference type="GeneID" id="3239"/>
<dbReference type="KEGG" id="hsa:3239"/>
<dbReference type="MANE-Select" id="ENST00000392539.4">
    <property type="protein sequence ID" value="ENSP00000376322.3"/>
    <property type="RefSeq nucleotide sequence ID" value="NM_000523.4"/>
    <property type="RefSeq protein sequence ID" value="NP_000514.2"/>
</dbReference>
<dbReference type="UCSC" id="uc002ukf.2">
    <property type="organism name" value="human"/>
</dbReference>
<dbReference type="AGR" id="HGNC:5136"/>
<dbReference type="CTD" id="3239"/>
<dbReference type="DisGeNET" id="3239"/>
<dbReference type="GeneCards" id="HOXD13"/>
<dbReference type="HGNC" id="HGNC:5136">
    <property type="gene designation" value="HOXD13"/>
</dbReference>
<dbReference type="HPA" id="ENSG00000128714">
    <property type="expression patterns" value="Group enriched (cervix, intestine, prostate, seminal vesicle, vagina)"/>
</dbReference>
<dbReference type="MalaCards" id="HOXD13"/>
<dbReference type="MIM" id="113200">
    <property type="type" value="phenotype"/>
</dbReference>
<dbReference type="MIM" id="113300">
    <property type="type" value="phenotype"/>
</dbReference>
<dbReference type="MIM" id="142989">
    <property type="type" value="gene"/>
</dbReference>
<dbReference type="MIM" id="186000">
    <property type="type" value="phenotype"/>
</dbReference>
<dbReference type="MIM" id="186300">
    <property type="type" value="phenotype"/>
</dbReference>
<dbReference type="MIM" id="192350">
    <property type="type" value="phenotype"/>
</dbReference>
<dbReference type="MIM" id="610713">
    <property type="type" value="phenotype"/>
</dbReference>
<dbReference type="neXtProt" id="NX_P35453"/>
<dbReference type="OpenTargets" id="ENSG00000128714"/>
<dbReference type="Orphanet" id="93387">
    <property type="disease" value="Brachydactyly type E"/>
</dbReference>
<dbReference type="Orphanet" id="93409">
    <property type="disease" value="Brachydactyly-syndactyly, Zhao type"/>
</dbReference>
<dbReference type="Orphanet" id="93406">
    <property type="disease" value="Syndactyly type 5"/>
</dbReference>
<dbReference type="Orphanet" id="295195">
    <property type="disease" value="Synpolydactyly type 1"/>
</dbReference>
<dbReference type="Orphanet" id="887">
    <property type="disease" value="VACTERL/VATER association"/>
</dbReference>
<dbReference type="Orphanet" id="295191">
    <property type="disease" value="Zygodactyly type 3"/>
</dbReference>
<dbReference type="PharmGKB" id="PA29410"/>
<dbReference type="VEuPathDB" id="HostDB:ENSG00000128714"/>
<dbReference type="eggNOG" id="KOG0487">
    <property type="taxonomic scope" value="Eukaryota"/>
</dbReference>
<dbReference type="GeneTree" id="ENSGT00940000161457"/>
<dbReference type="HOGENOM" id="CLU_059940_1_0_1"/>
<dbReference type="InParanoid" id="P35453"/>
<dbReference type="OMA" id="KAASWEM"/>
<dbReference type="OrthoDB" id="6159439at2759"/>
<dbReference type="PAN-GO" id="P35453">
    <property type="GO annotations" value="3 GO annotations based on evolutionary models"/>
</dbReference>
<dbReference type="PhylomeDB" id="P35453"/>
<dbReference type="TreeFam" id="TF330813"/>
<dbReference type="PathwayCommons" id="P35453"/>
<dbReference type="SignaLink" id="P35453"/>
<dbReference type="SIGNOR" id="P35453"/>
<dbReference type="BioGRID-ORCS" id="3239">
    <property type="hits" value="251 hits in 1173 CRISPR screens"/>
</dbReference>
<dbReference type="CD-CODE" id="38EC0B30">
    <property type="entry name" value="Transcriptional condensate"/>
</dbReference>
<dbReference type="ChiTaRS" id="HOXD13">
    <property type="organism name" value="human"/>
</dbReference>
<dbReference type="GeneWiki" id="HOXD13"/>
<dbReference type="GenomeRNAi" id="3239"/>
<dbReference type="Pharos" id="P35453">
    <property type="development level" value="Tbio"/>
</dbReference>
<dbReference type="PRO" id="PR:P35453"/>
<dbReference type="Proteomes" id="UP000005640">
    <property type="component" value="Chromosome 2"/>
</dbReference>
<dbReference type="RNAct" id="P35453">
    <property type="molecule type" value="protein"/>
</dbReference>
<dbReference type="Bgee" id="ENSG00000128714">
    <property type="expression patterns" value="Expressed in urethra and 32 other cell types or tissues"/>
</dbReference>
<dbReference type="GO" id="GO:0000785">
    <property type="term" value="C:chromatin"/>
    <property type="evidence" value="ECO:0000247"/>
    <property type="project" value="NTNU_SB"/>
</dbReference>
<dbReference type="GO" id="GO:0005654">
    <property type="term" value="C:nucleoplasm"/>
    <property type="evidence" value="ECO:0000314"/>
    <property type="project" value="HPA"/>
</dbReference>
<dbReference type="GO" id="GO:0003682">
    <property type="term" value="F:chromatin binding"/>
    <property type="evidence" value="ECO:0007669"/>
    <property type="project" value="Ensembl"/>
</dbReference>
<dbReference type="GO" id="GO:0003677">
    <property type="term" value="F:DNA binding"/>
    <property type="evidence" value="ECO:0000314"/>
    <property type="project" value="UniProtKB"/>
</dbReference>
<dbReference type="GO" id="GO:0001228">
    <property type="term" value="F:DNA-binding transcription activator activity, RNA polymerase II-specific"/>
    <property type="evidence" value="ECO:0000315"/>
    <property type="project" value="UniProtKB"/>
</dbReference>
<dbReference type="GO" id="GO:0003700">
    <property type="term" value="F:DNA-binding transcription factor activity"/>
    <property type="evidence" value="ECO:0000250"/>
    <property type="project" value="UniProtKB"/>
</dbReference>
<dbReference type="GO" id="GO:0000981">
    <property type="term" value="F:DNA-binding transcription factor activity, RNA polymerase II-specific"/>
    <property type="evidence" value="ECO:0000247"/>
    <property type="project" value="NTNU_SB"/>
</dbReference>
<dbReference type="GO" id="GO:0000978">
    <property type="term" value="F:RNA polymerase II cis-regulatory region sequence-specific DNA binding"/>
    <property type="evidence" value="ECO:0000318"/>
    <property type="project" value="GO_Central"/>
</dbReference>
<dbReference type="GO" id="GO:1990837">
    <property type="term" value="F:sequence-specific double-stranded DNA binding"/>
    <property type="evidence" value="ECO:0000314"/>
    <property type="project" value="ARUK-UCL"/>
</dbReference>
<dbReference type="GO" id="GO:0009952">
    <property type="term" value="P:anterior/posterior pattern specification"/>
    <property type="evidence" value="ECO:0007669"/>
    <property type="project" value="Ensembl"/>
</dbReference>
<dbReference type="GO" id="GO:0060602">
    <property type="term" value="P:branch elongation of an epithelium"/>
    <property type="evidence" value="ECO:0007669"/>
    <property type="project" value="Ensembl"/>
</dbReference>
<dbReference type="GO" id="GO:0042733">
    <property type="term" value="P:embryonic digit morphogenesis"/>
    <property type="evidence" value="ECO:0007669"/>
    <property type="project" value="Ensembl"/>
</dbReference>
<dbReference type="GO" id="GO:0048619">
    <property type="term" value="P:embryonic hindgut morphogenesis"/>
    <property type="evidence" value="ECO:0007669"/>
    <property type="project" value="Ensembl"/>
</dbReference>
<dbReference type="GO" id="GO:0030539">
    <property type="term" value="P:male genitalia development"/>
    <property type="evidence" value="ECO:0007669"/>
    <property type="project" value="Ensembl"/>
</dbReference>
<dbReference type="GO" id="GO:0060571">
    <property type="term" value="P:morphogenesis of an epithelial fold"/>
    <property type="evidence" value="ECO:0007669"/>
    <property type="project" value="Ensembl"/>
</dbReference>
<dbReference type="GO" id="GO:0045944">
    <property type="term" value="P:positive regulation of transcription by RNA polymerase II"/>
    <property type="evidence" value="ECO:0000315"/>
    <property type="project" value="UniProtKB"/>
</dbReference>
<dbReference type="GO" id="GO:0060527">
    <property type="term" value="P:prostate epithelial cord arborization involved in prostate glandular acinus morphogenesis"/>
    <property type="evidence" value="ECO:0007669"/>
    <property type="project" value="Ensembl"/>
</dbReference>
<dbReference type="GO" id="GO:0060687">
    <property type="term" value="P:regulation of branching involved in prostate gland morphogenesis"/>
    <property type="evidence" value="ECO:0007669"/>
    <property type="project" value="Ensembl"/>
</dbReference>
<dbReference type="GO" id="GO:0042127">
    <property type="term" value="P:regulation of cell population proliferation"/>
    <property type="evidence" value="ECO:0007669"/>
    <property type="project" value="Ensembl"/>
</dbReference>
<dbReference type="GO" id="GO:0006355">
    <property type="term" value="P:regulation of DNA-templated transcription"/>
    <property type="evidence" value="ECO:0000304"/>
    <property type="project" value="ProtInc"/>
</dbReference>
<dbReference type="GO" id="GO:0006357">
    <property type="term" value="P:regulation of transcription by RNA polymerase II"/>
    <property type="evidence" value="ECO:0000318"/>
    <property type="project" value="GO_Central"/>
</dbReference>
<dbReference type="GO" id="GO:0033574">
    <property type="term" value="P:response to testosterone"/>
    <property type="evidence" value="ECO:0007669"/>
    <property type="project" value="Ensembl"/>
</dbReference>
<dbReference type="GO" id="GO:0001501">
    <property type="term" value="P:skeletal system development"/>
    <property type="evidence" value="ECO:0000304"/>
    <property type="project" value="ProtInc"/>
</dbReference>
<dbReference type="GO" id="GO:0006366">
    <property type="term" value="P:transcription by RNA polymerase II"/>
    <property type="evidence" value="ECO:0007669"/>
    <property type="project" value="Ensembl"/>
</dbReference>
<dbReference type="CDD" id="cd00086">
    <property type="entry name" value="homeodomain"/>
    <property type="match status" value="1"/>
</dbReference>
<dbReference type="FunFam" id="1.10.10.60:FF:000084">
    <property type="entry name" value="Homeobox protein Hox-D13"/>
    <property type="match status" value="1"/>
</dbReference>
<dbReference type="Gene3D" id="1.10.10.60">
    <property type="entry name" value="Homeodomain-like"/>
    <property type="match status" value="1"/>
</dbReference>
<dbReference type="InterPro" id="IPR051003">
    <property type="entry name" value="AP_axis_regulatory_Homeobox"/>
</dbReference>
<dbReference type="InterPro" id="IPR001356">
    <property type="entry name" value="HD"/>
</dbReference>
<dbReference type="InterPro" id="IPR017970">
    <property type="entry name" value="Homeobox_CS"/>
</dbReference>
<dbReference type="InterPro" id="IPR009057">
    <property type="entry name" value="Homeodomain-like_sf"/>
</dbReference>
<dbReference type="InterPro" id="IPR022067">
    <property type="entry name" value="HoxA13_N"/>
</dbReference>
<dbReference type="PANTHER" id="PTHR45804:SF4">
    <property type="entry name" value="HOMEOBOX PROTEIN HOX-D13"/>
    <property type="match status" value="1"/>
</dbReference>
<dbReference type="PANTHER" id="PTHR45804">
    <property type="entry name" value="SEGMENTATION PROTEIN FUSHI TARAZU-LIKE PROTEIN"/>
    <property type="match status" value="1"/>
</dbReference>
<dbReference type="Pfam" id="PF00046">
    <property type="entry name" value="Homeodomain"/>
    <property type="match status" value="1"/>
</dbReference>
<dbReference type="Pfam" id="PF12284">
    <property type="entry name" value="HoxA13_N"/>
    <property type="match status" value="1"/>
</dbReference>
<dbReference type="SMART" id="SM00389">
    <property type="entry name" value="HOX"/>
    <property type="match status" value="1"/>
</dbReference>
<dbReference type="SUPFAM" id="SSF46689">
    <property type="entry name" value="Homeodomain-like"/>
    <property type="match status" value="1"/>
</dbReference>
<dbReference type="PROSITE" id="PS00027">
    <property type="entry name" value="HOMEOBOX_1"/>
    <property type="match status" value="1"/>
</dbReference>
<dbReference type="PROSITE" id="PS50071">
    <property type="entry name" value="HOMEOBOX_2"/>
    <property type="match status" value="1"/>
</dbReference>
<comment type="function">
    <text evidence="1 10">Sequence-specific transcription factor that binds gene promoters and activates their transcription (PubMed:24789103). Part of a developmental regulatory system that provides cells with specific positional identities on the anterior-posterior axis (By similarity).</text>
</comment>
<comment type="subcellular location">
    <subcellularLocation>
        <location evidence="14">Nucleus</location>
    </subcellularLocation>
</comment>
<comment type="polymorphism">
    <text>The poly-Ala region is polymorphic (11 to 15 residues) in the normal population and is expanded to about 22-29 residues in SPD1 and syndactyly type 5 patients.</text>
</comment>
<comment type="disease" evidence="4 6 10 11 12">
    <disease id="DI-02355">
        <name>Synpolydactyly 1</name>
        <acronym>SPD1</acronym>
        <description>Limb malformation that shows a characteristic manifestation in both hands and feet. This condition is inherited as an autosomal dominant trait with reduced penetrance.</description>
        <dbReference type="MIM" id="186000"/>
    </disease>
    <text>The disease is caused by variants affecting the gene represented in this entry.</text>
</comment>
<comment type="disease" evidence="5">
    <disease id="DI-00198">
        <name>Brachydactyly D</name>
        <acronym>BDD</acronym>
        <description>A form of brachydactyly. Brachydactyly defines a group of inherited malformations characterized by shortening of the digits due to abnormal development of the phalanges and/or the metacarpals. Brachydactyly type D is characterized by short and broad terminal phalanges of the thumbs and big toes.</description>
        <dbReference type="MIM" id="113200"/>
    </disease>
    <text>The disease is caused by variants affecting the gene represented in this entry.</text>
</comment>
<comment type="disease" evidence="7">
    <disease id="DI-02354">
        <name>Syndactyly 5</name>
        <acronym>SDTY5</acronym>
        <description>A form of syndactyly, a congenital anomaly of the hand or foot marked by persistence of the webbing between adjacent digits that are more or less completely attached. The characteristic finding in SDTY5 is the presence of an associated metacarpal and metatarsal fusion. The metacarpals and metatarsals most commonly fused are the 4th and 5th or the 3rd and 4th. Soft tissue syndactyly usually affects the 3rd and 4th fingers and the 2nd and 3rd toes.</description>
        <dbReference type="MIM" id="186300"/>
    </disease>
    <text>The disease is caused by variants affecting the gene represented in this entry.</text>
</comment>
<comment type="disease" evidence="7">
    <disease id="DI-01291">
        <name>Brachydactyly-syndactyly syndrome</name>
        <acronym>BDSD</acronym>
        <description>A disease characterized by generalized shortening of the hands and feet, broad and short distal phalanges of the thumbs, and cutaneous syndactyly of toes 2 and 3. The limb phenotypes observed in this syndrome overlap those of brachydactyly types A4, D, E and syndactyly type 1.</description>
        <dbReference type="MIM" id="610713"/>
    </disease>
    <text>The disease is caused by variants affecting the gene represented in this entry.</text>
</comment>
<comment type="disease" evidence="5 10">
    <disease id="DI-00199">
        <name>Brachydactyly E1</name>
        <acronym>BDE1</acronym>
        <description>A form of brachydactyly. Brachydactyly defines a group of inherited malformations characterized by shortening of the digits due to abnormal development of the phalanges and/or the metacarpals. Brachydactyly type E is characterized by shortening of the fingers mainly in the metacarpals and metatarsals. Wide variability in the number of digits affected occurs from person to person, even in the same family. Some individuals are moderately short of stature. Brachydactyly type E1 is characterized by shortening limited to fourth metacarpals and/or metatarsals.</description>
        <dbReference type="MIM" id="113300"/>
    </disease>
    <text>The disease is caused by variants affecting the gene represented in this entry.</text>
</comment>
<comment type="disease" evidence="8">
    <disease id="DI-02577">
        <name>VACTERL association</name>
        <acronym>VACTERL</acronym>
        <description>VACTERL is an acronym for vertebral anomalies, anal atresia, congenital cardiac disease, tracheoesophageal fistula, renal anomalies, radial dysplasia, and other limb defects.</description>
        <dbReference type="MIM" id="192350"/>
    </disease>
    <text>The gene represented in this entry may be involved in disease pathogenesis.</text>
</comment>
<comment type="disease" evidence="9">
    <disease id="DI-04740">
        <name>Brachydactyly-syndactyly-oligodactyly syndrome</name>
        <acronym>BDSDO</acronym>
        <description>A syndrome characterized by a complex brachydactyly-syndactyly-oligodactyly phenotype. Limb anomalies include reduced number of digits that are severely shortened, camptodactyly, syndactyly, absence of terminal phalanges of the thumbs, and absence of nails of the thumbs and toes.</description>
        <dbReference type="MIM" id="610713"/>
    </disease>
    <text>The disease is caused by variants affecting the gene represented in this entry.</text>
</comment>
<comment type="similarity">
    <text evidence="13">Belongs to the Abd-B homeobox family.</text>
</comment>
<comment type="caution">
    <text evidence="13">It is uncertain whether Met-1 or Met-9 is the initiator.</text>
</comment>
<comment type="sequence caution" evidence="13">
    <conflict type="erroneous initiation">
        <sequence resource="EMBL-CDS" id="AAC51635"/>
    </conflict>
    <text>Truncated N-terminus.</text>
</comment>
<comment type="sequence caution" evidence="13">
    <conflict type="erroneous initiation">
        <sequence resource="EMBL-CDS" id="BAA95352"/>
    </conflict>
    <text>Truncated N-terminus.</text>
</comment>
<comment type="sequence caution" evidence="13">
    <conflict type="erroneous initiation">
        <sequence resource="EMBL-CDS" id="BAA95352"/>
    </conflict>
</comment>
<keyword id="KW-0217">Developmental protein</keyword>
<keyword id="KW-0225">Disease variant</keyword>
<keyword id="KW-0238">DNA-binding</keyword>
<keyword id="KW-0371">Homeobox</keyword>
<keyword id="KW-0539">Nucleus</keyword>
<keyword id="KW-1267">Proteomics identification</keyword>
<keyword id="KW-1185">Reference proteome</keyword>
<keyword id="KW-0804">Transcription</keyword>
<keyword id="KW-0805">Transcription regulation</keyword>
<keyword id="KW-0818">Triplet repeat expansion</keyword>
<reference key="1">
    <citation type="journal article" date="1996" name="Science">
        <title>Altered growth and branching patterns in synpolydactyly caused by mutations in HOXD13.</title>
        <authorList>
            <person name="Muragaki Y."/>
            <person name="Mundlos S."/>
            <person name="Upton J."/>
            <person name="Olsen B.R."/>
        </authorList>
    </citation>
    <scope>NUCLEOTIDE SEQUENCE [GENOMIC DNA]</scope>
</reference>
<reference key="2">
    <citation type="submission" date="1999-09" db="EMBL/GenBank/DDBJ databases">
        <title>The t(2:11)(q31:p15) translocation in acute myeloid leukemia fuses NUP98 nucleoporin gene to HOXD13 homeobox gene.</title>
        <authorList>
            <person name="Arai Y."/>
            <person name="Arai K."/>
            <person name="Kita K."/>
            <person name="Miwa H."/>
            <person name="Kamada N."/>
            <person name="Ohki M."/>
        </authorList>
    </citation>
    <scope>NUCLEOTIDE SEQUENCE [GENOMIC DNA]</scope>
</reference>
<reference key="3">
    <citation type="journal article" date="2005" name="Nature">
        <title>Generation and annotation of the DNA sequences of human chromosomes 2 and 4.</title>
        <authorList>
            <person name="Hillier L.W."/>
            <person name="Graves T.A."/>
            <person name="Fulton R.S."/>
            <person name="Fulton L.A."/>
            <person name="Pepin K.H."/>
            <person name="Minx P."/>
            <person name="Wagner-McPherson C."/>
            <person name="Layman D."/>
            <person name="Wylie K."/>
            <person name="Sekhon M."/>
            <person name="Becker M.C."/>
            <person name="Fewell G.A."/>
            <person name="Delehaunty K.D."/>
            <person name="Miner T.L."/>
            <person name="Nash W.E."/>
            <person name="Kremitzki C."/>
            <person name="Oddy L."/>
            <person name="Du H."/>
            <person name="Sun H."/>
            <person name="Bradshaw-Cordum H."/>
            <person name="Ali J."/>
            <person name="Carter J."/>
            <person name="Cordes M."/>
            <person name="Harris A."/>
            <person name="Isak A."/>
            <person name="van Brunt A."/>
            <person name="Nguyen C."/>
            <person name="Du F."/>
            <person name="Courtney L."/>
            <person name="Kalicki J."/>
            <person name="Ozersky P."/>
            <person name="Abbott S."/>
            <person name="Armstrong J."/>
            <person name="Belter E.A."/>
            <person name="Caruso L."/>
            <person name="Cedroni M."/>
            <person name="Cotton M."/>
            <person name="Davidson T."/>
            <person name="Desai A."/>
            <person name="Elliott G."/>
            <person name="Erb T."/>
            <person name="Fronick C."/>
            <person name="Gaige T."/>
            <person name="Haakenson W."/>
            <person name="Haglund K."/>
            <person name="Holmes A."/>
            <person name="Harkins R."/>
            <person name="Kim K."/>
            <person name="Kruchowski S.S."/>
            <person name="Strong C.M."/>
            <person name="Grewal N."/>
            <person name="Goyea E."/>
            <person name="Hou S."/>
            <person name="Levy A."/>
            <person name="Martinka S."/>
            <person name="Mead K."/>
            <person name="McLellan M.D."/>
            <person name="Meyer R."/>
            <person name="Randall-Maher J."/>
            <person name="Tomlinson C."/>
            <person name="Dauphin-Kohlberg S."/>
            <person name="Kozlowicz-Reilly A."/>
            <person name="Shah N."/>
            <person name="Swearengen-Shahid S."/>
            <person name="Snider J."/>
            <person name="Strong J.T."/>
            <person name="Thompson J."/>
            <person name="Yoakum M."/>
            <person name="Leonard S."/>
            <person name="Pearman C."/>
            <person name="Trani L."/>
            <person name="Radionenko M."/>
            <person name="Waligorski J.E."/>
            <person name="Wang C."/>
            <person name="Rock S.M."/>
            <person name="Tin-Wollam A.-M."/>
            <person name="Maupin R."/>
            <person name="Latreille P."/>
            <person name="Wendl M.C."/>
            <person name="Yang S.-P."/>
            <person name="Pohl C."/>
            <person name="Wallis J.W."/>
            <person name="Spieth J."/>
            <person name="Bieri T.A."/>
            <person name="Berkowicz N."/>
            <person name="Nelson J.O."/>
            <person name="Osborne J."/>
            <person name="Ding L."/>
            <person name="Meyer R."/>
            <person name="Sabo A."/>
            <person name="Shotland Y."/>
            <person name="Sinha P."/>
            <person name="Wohldmann P.E."/>
            <person name="Cook L.L."/>
            <person name="Hickenbotham M.T."/>
            <person name="Eldred J."/>
            <person name="Williams D."/>
            <person name="Jones T.A."/>
            <person name="She X."/>
            <person name="Ciccarelli F.D."/>
            <person name="Izaurralde E."/>
            <person name="Taylor J."/>
            <person name="Schmutz J."/>
            <person name="Myers R.M."/>
            <person name="Cox D.R."/>
            <person name="Huang X."/>
            <person name="McPherson J.D."/>
            <person name="Mardis E.R."/>
            <person name="Clifton S.W."/>
            <person name="Warren W.C."/>
            <person name="Chinwalla A.T."/>
            <person name="Eddy S.R."/>
            <person name="Marra M.A."/>
            <person name="Ovcharenko I."/>
            <person name="Furey T.S."/>
            <person name="Miller W."/>
            <person name="Eichler E.E."/>
            <person name="Bork P."/>
            <person name="Suyama M."/>
            <person name="Torrents D."/>
            <person name="Waterston R.H."/>
            <person name="Wilson R.K."/>
        </authorList>
    </citation>
    <scope>NUCLEOTIDE SEQUENCE [LARGE SCALE GENOMIC DNA]</scope>
</reference>
<reference key="4">
    <citation type="journal article" date="1991" name="Genomics">
        <title>EVX2, a human homeobox gene homologous to the even-skipped segmentation gene, is localized at the 5' end of HOX4 locus on chromosome 2.</title>
        <authorList>
            <person name="D'Esposito M."/>
            <person name="Morelli F."/>
            <person name="Acampora D."/>
            <person name="Migliaccio E."/>
            <person name="Simeone A."/>
            <person name="Boncinelli E."/>
        </authorList>
    </citation>
    <scope>NUCLEOTIDE SEQUENCE [GENOMIC DNA] OF 276-341</scope>
</reference>
<reference key="5">
    <citation type="journal article" date="2008" name="Am. J. Med. Genet. A">
        <title>Identification of a HOXD13 mutation in a VACTERL patient.</title>
        <authorList>
            <person name="Garcia-Barcelo M.-M."/>
            <person name="Wong K.K."/>
            <person name="Lui V.C."/>
            <person name="Yuan Z.W."/>
            <person name="So M.T."/>
            <person name="Ngan E.S."/>
            <person name="Miao X.P."/>
            <person name="Chung P.H."/>
            <person name="Khong P.L."/>
            <person name="Tam P.K."/>
        </authorList>
    </citation>
    <scope>INVOLVEMENT IN VACTERL</scope>
</reference>
<reference key="6">
    <citation type="journal article" date="2013" name="Genome Res.">
        <title>Distinct global shifts in genomic binding profiles of limb malformation-associated HOXD13 mutations.</title>
        <authorList>
            <person name="Ibrahim D.M."/>
            <person name="Hansen P."/>
            <person name="Roedelsperger C."/>
            <person name="Stiege A.C."/>
            <person name="Doelken S.C."/>
            <person name="Horn D."/>
            <person name="Jaeger M."/>
            <person name="Janetzki C."/>
            <person name="Krawitz P."/>
            <person name="Leschik G."/>
            <person name="Wagner F."/>
            <person name="Scheuer T."/>
            <person name="Schmidt-von Kegler M."/>
            <person name="Seemann P."/>
            <person name="Timmermann B."/>
            <person name="Robinson P.N."/>
            <person name="Mundlos S."/>
            <person name="Hecht J."/>
        </authorList>
    </citation>
    <scope>INVOLVEMENT IN BDSDO</scope>
    <scope>VARIANT BDSDO LYS-325</scope>
</reference>
<reference key="7">
    <citation type="journal article" date="1996" name="Hum. Mol. Genet.">
        <title>Genomic structure of HOXD13 gene: a nine polyalanine duplication causes synpolydactyly in two unrelated families.</title>
        <authorList>
            <person name="Akarsu A.N."/>
            <person name="Stoilov I."/>
            <person name="Yilmaz E."/>
            <person name="Sayli B.S."/>
            <person name="Sarfarazi M."/>
        </authorList>
    </citation>
    <scope>VARIANT SPD1 ALA-ALA-ALA-ALA-ALA-ALA-ALA-ALA-ALA-57 INS</scope>
</reference>
<reference key="8">
    <citation type="journal article" date="2002" name="J. Med. Genet.">
        <title>Severe digital abnormalities in a patient heterozygous for both a novel missense mutation in HOXD13 and a polyalanine tract expansion in HOXA13.</title>
        <authorList>
            <person name="Debeer P."/>
            <person name="Bacchelli C."/>
            <person name="Scambler P.J."/>
            <person name="De Smet L."/>
            <person name="Fryns J.-P."/>
            <person name="Goodman F.R."/>
        </authorList>
    </citation>
    <scope>VARIANT SPD1 TRP-306</scope>
</reference>
<reference key="9">
    <citation type="journal article" date="2003" name="Am. J. Hum. Genet.">
        <title>Missense mutations in the homeodomain of HOXD13 are associated with brachydactyly types D and E.</title>
        <authorList>
            <person name="Johnson D."/>
            <person name="Kan S.H."/>
            <person name="Oldridge M."/>
            <person name="Trembath R.C."/>
            <person name="Roche P."/>
            <person name="Esnouf R.M."/>
            <person name="Giele H."/>
            <person name="Wilkie A.O."/>
        </authorList>
    </citation>
    <scope>VARIANTS BDE1 CYS-316 AND LEU-322</scope>
    <scope>VARIANT BDD CYS-316</scope>
</reference>
<reference key="10">
    <citation type="journal article" date="2005" name="Am. J. Med. Genet. A">
        <title>A 72-year-old Danish puzzle resolved -- comparative analysis of phenotypes in families with different-sized HOXD13 polyalanine expansions.</title>
        <authorList>
            <person name="Kjaer K.W."/>
            <person name="Hansen L."/>
            <person name="Eiberg H."/>
            <person name="Utkus A."/>
            <person name="Skovgaard L.T."/>
            <person name="Leicht P."/>
            <person name="Opitz J.M."/>
            <person name="Tommerup N."/>
        </authorList>
    </citation>
    <scope>VARIANT SPD1 ALA-ALA-ALA-ALA-ALA-ALA-ALA-ALA-ALA-57 INS</scope>
    <scope>VARIANT 57-ALA-ALA-58 DEL</scope>
</reference>
<reference key="11">
    <citation type="journal article" date="2007" name="Am. J. Hum. Genet.">
        <title>Mutations in HOXD13 underlie syndactyly type V and a novel brachydactyly-syndactyly syndrome.</title>
        <authorList>
            <person name="Zhao X."/>
            <person name="Sun M."/>
            <person name="Zhao J."/>
            <person name="Leyva J.A."/>
            <person name="Zhu H."/>
            <person name="Yang W."/>
            <person name="Zeng X."/>
            <person name="Ao Y."/>
            <person name="Liu Q."/>
            <person name="Liu G."/>
            <person name="Lo W.H.Y."/>
            <person name="Jabs E.W."/>
            <person name="Amzel L.M."/>
            <person name="Shan X."/>
            <person name="Zhang X."/>
        </authorList>
    </citation>
    <scope>VARIANT BDSD 57-ALA--ALA-62 DEL</scope>
    <scope>VARIANT SDTY5 ARG-325</scope>
    <scope>CHARACTERIZATION OF VARIANT BDSD 57-ALA--ALA-62 DEL</scope>
    <scope>CHARACTERIZATION OF VARIANT SDTY5 ARG-325</scope>
</reference>
<reference key="12">
    <citation type="journal article" date="2014" name="PLoS ONE">
        <title>Mutations in the homeodomain of HOXD13 cause syndactyly type 1-c in two Chinese families.</title>
        <authorList>
            <person name="Dai L."/>
            <person name="Liu D."/>
            <person name="Song M."/>
            <person name="Xu X."/>
            <person name="Xiong G."/>
            <person name="Yang K."/>
            <person name="Zhang K."/>
            <person name="Meng H."/>
            <person name="Guo H."/>
            <person name="Bai Y."/>
        </authorList>
    </citation>
    <scope>VARIANTS SPD1 GLN-306 AND GLY-306</scope>
    <scope>CHARACTERIZATION OF VARIANTS SPD1 GLN-306 AND GLY-306</scope>
    <scope>CHARACTERIZATION OF VARIANT BDE1 LEU-322</scope>
    <scope>FUNCTION</scope>
    <scope>SUBCELLULAR LOCATION</scope>
</reference>
<reference key="13">
    <citation type="journal article" date="2016" name="Am. J. Med. Genet. A">
        <title>A homozygous HOXD13 missense mutation causes a severe form of synpolydactyly with metacarpal to carpal transformation.</title>
        <authorList>
            <person name="Ibrahim D.M."/>
            <person name="Tayebi N."/>
            <person name="Knaus A."/>
            <person name="Stiege A.C."/>
            <person name="Sahebzamani A."/>
            <person name="Hecht J."/>
            <person name="Mundlos S."/>
            <person name="Spielmann M."/>
        </authorList>
    </citation>
    <scope>VARIANT SPD1 ARG-313</scope>
    <scope>CHARACTERIZATION OF VARIANT SPD1 ARG-313</scope>
</reference>
<organism>
    <name type="scientific">Homo sapiens</name>
    <name type="common">Human</name>
    <dbReference type="NCBI Taxonomy" id="9606"/>
    <lineage>
        <taxon>Eukaryota</taxon>
        <taxon>Metazoa</taxon>
        <taxon>Chordata</taxon>
        <taxon>Craniata</taxon>
        <taxon>Vertebrata</taxon>
        <taxon>Euteleostomi</taxon>
        <taxon>Mammalia</taxon>
        <taxon>Eutheria</taxon>
        <taxon>Euarchontoglires</taxon>
        <taxon>Primates</taxon>
        <taxon>Haplorrhini</taxon>
        <taxon>Catarrhini</taxon>
        <taxon>Hominidae</taxon>
        <taxon>Homo</taxon>
    </lineage>
</organism>
<name>HXD13_HUMAN</name>
<sequence length="343" mass="36101">MSRAGSWDMDGLRADGGGAGGAPASSSSSSVAAAAASGQCRGFLSAPVFAGTHSGRAAAAAAAAAAAAAAASGFAYPGTSERTGSSSSSSSSAVVAARPEAPPAKECPAPTPAAAAAAPPSAPALGYGYHFGNGYYSCRMSHGVGLQQNALKSSPHASLGGFPVEKYMDVSGLASSSVPANEVPARAKEVSFYQGYTSPYQHVPGYIDMVSTFGSGEPRHEAYISMEGYQSWTLANGWNSQVYCTKDQPQGSHFWKSSFPGDVALNQPDMCVYRRGRKKRVPYTKLQLKELENEYAINKFINKDKRRRISAATNLSERQVTIWFQNRRVKDKKIVSKLKDTVS</sequence>
<accession>P35453</accession>
<protein>
    <recommendedName>
        <fullName>Homeobox protein Hox-D13</fullName>
    </recommendedName>
    <alternativeName>
        <fullName>Homeobox protein Hox-4I</fullName>
    </alternativeName>
</protein>
<feature type="chain" id="PRO_0000200244" description="Homeobox protein Hox-D13">
    <location>
        <begin position="1"/>
        <end position="343"/>
    </location>
</feature>
<feature type="DNA-binding region" description="Homeobox" evidence="2">
    <location>
        <begin position="276"/>
        <end position="335"/>
    </location>
</feature>
<feature type="region of interest" description="Disordered" evidence="3">
    <location>
        <begin position="1"/>
        <end position="28"/>
    </location>
</feature>
<feature type="region of interest" description="Disordered" evidence="3">
    <location>
        <begin position="78"/>
        <end position="115"/>
    </location>
</feature>
<feature type="compositionally biased region" description="Low complexity" evidence="3">
    <location>
        <begin position="85"/>
        <end position="115"/>
    </location>
</feature>
<feature type="sequence variant" id="VAR_031649" description="In BDSD; does not affect capacity to transactivate EPHA7 promoter.">
    <location>
        <begin position="57"/>
        <end position="63"/>
    </location>
</feature>
<feature type="sequence variant" id="VAR_031648" evidence="6">
    <location>
        <begin position="57"/>
        <end position="58"/>
    </location>
</feature>
<feature type="sequence variant" id="VAR_003818" description="In SPD1." evidence="6 12">
    <original>A</original>
    <variation>AAAAAAAAAA</variation>
    <location>
        <position position="57"/>
    </location>
</feature>
<feature type="sequence variant" id="VAR_031650" description="In dbSNP:rs35290213.">
    <original>S</original>
    <variation>A</variation>
    <location>
        <position position="252"/>
    </location>
</feature>
<feature type="sequence variant" id="VAR_076833" description="In SPD1; decreases the transcriptional activator activity; dbSNP:rs28933082." evidence="10">
    <original>R</original>
    <variation>G</variation>
    <location>
        <position position="306"/>
    </location>
</feature>
<feature type="sequence variant" id="VAR_076834" description="In SPD1; decreases the transcriptional activator activity; dbSNP:rs879255265." evidence="10">
    <original>R</original>
    <variation>Q</variation>
    <location>
        <position position="306"/>
    </location>
</feature>
<feature type="sequence variant" id="VAR_031651" description="In SPD1; dbSNP:rs28933082." evidence="4">
    <original>R</original>
    <variation>W</variation>
    <location>
        <position position="306"/>
    </location>
</feature>
<feature type="sequence variant" id="VAR_075400" description="In SPD1; disrupts interaction with DNA; dbSNP:rs1432063993." evidence="11">
    <original>T</original>
    <variation>R</variation>
    <location>
        <position position="313"/>
    </location>
</feature>
<feature type="sequence variant" id="VAR_015952" description="In BDE1 and BDD; dbSNP:rs28928892." evidence="5">
    <original>S</original>
    <variation>C</variation>
    <location>
        <position position="316"/>
    </location>
</feature>
<feature type="sequence variant" id="VAR_015953" description="In BDE1; decreases the transcriptional activator activity; dbSNP:rs28928891." evidence="5 10">
    <original>I</original>
    <variation>L</variation>
    <location>
        <position position="322"/>
    </location>
</feature>
<feature type="sequence variant" id="VAR_076835" description="In BDSDO; dbSNP:rs875989842." evidence="9">
    <original>Q</original>
    <variation>K</variation>
    <location>
        <position position="325"/>
    </location>
</feature>
<feature type="sequence variant" id="VAR_031652" description="In SDTY5; impairs capacity to transactivate EPHA7 promoter; dbSNP:rs104893635." evidence="7 9">
    <original>Q</original>
    <variation>R</variation>
    <location>
        <position position="325"/>
    </location>
</feature>